<gene>
    <name evidence="5" type="primary">MYB73</name>
    <name evidence="7" type="ordered locus">At4g37260</name>
    <name type="ORF">AP22.97</name>
    <name evidence="8" type="ORF">C7A10.100</name>
</gene>
<feature type="chain" id="PRO_0000442697" description="Transcription factor MYB73">
    <location>
        <begin position="1"/>
        <end position="320"/>
    </location>
</feature>
<feature type="domain" description="HTH myb-type 1" evidence="1">
    <location>
        <begin position="8"/>
        <end position="63"/>
    </location>
</feature>
<feature type="domain" description="HTH myb-type 2" evidence="1">
    <location>
        <begin position="65"/>
        <end position="114"/>
    </location>
</feature>
<feature type="DNA-binding region" description="H-T-H motif" evidence="1">
    <location>
        <begin position="36"/>
        <end position="59"/>
    </location>
</feature>
<feature type="DNA-binding region" description="H-T-H motif" evidence="1">
    <location>
        <begin position="87"/>
        <end position="110"/>
    </location>
</feature>
<feature type="region of interest" description="Disordered" evidence="2">
    <location>
        <begin position="132"/>
        <end position="173"/>
    </location>
</feature>
<feature type="compositionally biased region" description="Polar residues" evidence="2">
    <location>
        <begin position="158"/>
        <end position="171"/>
    </location>
</feature>
<feature type="sequence conflict" description="In Ref. 6; AAC83628." evidence="6" ref="6">
    <original>L</original>
    <variation>P</variation>
    <location>
        <position position="93"/>
    </location>
</feature>
<feature type="sequence conflict" description="In Ref. 6; AAC83628." evidence="6" ref="6">
    <original>D</original>
    <variation>G</variation>
    <location>
        <position position="164"/>
    </location>
</feature>
<feature type="sequence conflict" description="In Ref. 6; AAC83628." evidence="6" ref="6">
    <original>FI</original>
    <variation>SV</variation>
    <location>
        <begin position="309"/>
        <end position="310"/>
    </location>
</feature>
<protein>
    <recommendedName>
        <fullName evidence="5">Transcription factor MYB73</fullName>
    </recommendedName>
    <alternativeName>
        <fullName evidence="5">Myb-related protein 73</fullName>
        <shortName evidence="5">AtMYB73</shortName>
    </alternativeName>
</protein>
<sequence length="320" mass="34849">MSNPTRKNMERIKGPWSPEEDDLLQRLVQKHGPRNWSLISKSIPGRSGKSCRLRWCNQLSPEVEHRAFSQEEDETIIRAHARFGNKWATISRLLNGRTDNAIKNHWNSTLKRKCSVEGQSCDFGGNGGYDGNLGEEQPLKRTASGGGGVSTGLYMSPGSPSGSDVSEQSSGGAHVFKPTVRSEVTASSSGEDPPTYLSLSLPWTDETVRVNEPVQLNQNTVMDGGYTAELFPVRKEEQVEVEEEEAKGISGGFGGEFMTVVQEMIRTEVRSYMADLQRGNVGGSSSGGGGGGSCMPQSVNSRRVGFREFIVNQIGIGKME</sequence>
<evidence type="ECO:0000255" key="1">
    <source>
        <dbReference type="PROSITE-ProRule" id="PRU00625"/>
    </source>
</evidence>
<evidence type="ECO:0000256" key="2">
    <source>
        <dbReference type="SAM" id="MobiDB-lite"/>
    </source>
</evidence>
<evidence type="ECO:0000269" key="3">
    <source>
    </source>
</evidence>
<evidence type="ECO:0000269" key="4">
    <source>
    </source>
</evidence>
<evidence type="ECO:0000303" key="5">
    <source>
    </source>
</evidence>
<evidence type="ECO:0000305" key="6"/>
<evidence type="ECO:0000312" key="7">
    <source>
        <dbReference type="Araport" id="AT4G37260"/>
    </source>
</evidence>
<evidence type="ECO:0000312" key="8">
    <source>
        <dbReference type="EMBL" id="CAB16756.1"/>
    </source>
</evidence>
<organism>
    <name type="scientific">Arabidopsis thaliana</name>
    <name type="common">Mouse-ear cress</name>
    <dbReference type="NCBI Taxonomy" id="3702"/>
    <lineage>
        <taxon>Eukaryota</taxon>
        <taxon>Viridiplantae</taxon>
        <taxon>Streptophyta</taxon>
        <taxon>Embryophyta</taxon>
        <taxon>Tracheophyta</taxon>
        <taxon>Spermatophyta</taxon>
        <taxon>Magnoliopsida</taxon>
        <taxon>eudicotyledons</taxon>
        <taxon>Gunneridae</taxon>
        <taxon>Pentapetalae</taxon>
        <taxon>rosids</taxon>
        <taxon>malvids</taxon>
        <taxon>Brassicales</taxon>
        <taxon>Brassicaceae</taxon>
        <taxon>Camelineae</taxon>
        <taxon>Arabidopsis</taxon>
    </lineage>
</organism>
<reference key="1">
    <citation type="submission" date="2004-01" db="EMBL/GenBank/DDBJ databases">
        <title>The MYB transcription factor family in Arabidopsis: a genome-wide cloning and expression pattern analysis.</title>
        <authorList>
            <person name="Qu L.-J."/>
            <person name="Gu H."/>
        </authorList>
    </citation>
    <scope>NUCLEOTIDE SEQUENCE [MRNA]</scope>
</reference>
<reference key="2">
    <citation type="journal article" date="1998" name="Nature">
        <title>Analysis of 1.9 Mb of contiguous sequence from chromosome 4 of Arabidopsis thaliana.</title>
        <authorList>
            <person name="Bevan M."/>
            <person name="Bancroft I."/>
            <person name="Bent E."/>
            <person name="Love K."/>
            <person name="Goodman H.M."/>
            <person name="Dean C."/>
            <person name="Bergkamp R."/>
            <person name="Dirkse W."/>
            <person name="van Staveren M."/>
            <person name="Stiekema W."/>
            <person name="Drost L."/>
            <person name="Ridley P."/>
            <person name="Hudson S.-A."/>
            <person name="Patel K."/>
            <person name="Murphy G."/>
            <person name="Piffanelli P."/>
            <person name="Wedler H."/>
            <person name="Wedler E."/>
            <person name="Wambutt R."/>
            <person name="Weitzenegger T."/>
            <person name="Pohl T."/>
            <person name="Terryn N."/>
            <person name="Gielen J."/>
            <person name="Villarroel R."/>
            <person name="De Clercq R."/>
            <person name="van Montagu M."/>
            <person name="Lecharny A."/>
            <person name="Aubourg S."/>
            <person name="Gy I."/>
            <person name="Kreis M."/>
            <person name="Lao N."/>
            <person name="Kavanagh T."/>
            <person name="Hempel S."/>
            <person name="Kotter P."/>
            <person name="Entian K.-D."/>
            <person name="Rieger M."/>
            <person name="Schaefer M."/>
            <person name="Funk B."/>
            <person name="Mueller-Auer S."/>
            <person name="Silvey M."/>
            <person name="James R."/>
            <person name="Monfort A."/>
            <person name="Pons A."/>
            <person name="Puigdomenech P."/>
            <person name="Douka A."/>
            <person name="Voukelatou E."/>
            <person name="Milioni D."/>
            <person name="Hatzopoulos P."/>
            <person name="Piravandi E."/>
            <person name="Obermaier B."/>
            <person name="Hilbert H."/>
            <person name="Duesterhoeft A."/>
            <person name="Moores T."/>
            <person name="Jones J.D.G."/>
            <person name="Eneva T."/>
            <person name="Palme K."/>
            <person name="Benes V."/>
            <person name="Rechmann S."/>
            <person name="Ansorge W."/>
            <person name="Cooke R."/>
            <person name="Berger C."/>
            <person name="Delseny M."/>
            <person name="Voet M."/>
            <person name="Volckaert G."/>
            <person name="Mewes H.-W."/>
            <person name="Klosterman S."/>
            <person name="Schueller C."/>
            <person name="Chalwatzis N."/>
        </authorList>
    </citation>
    <scope>NUCLEOTIDE SEQUENCE [LARGE SCALE GENOMIC DNA]</scope>
    <source>
        <strain>cv. Columbia</strain>
    </source>
</reference>
<reference key="3">
    <citation type="journal article" date="1999" name="Nature">
        <title>Sequence and analysis of chromosome 4 of the plant Arabidopsis thaliana.</title>
        <authorList>
            <person name="Mayer K.F.X."/>
            <person name="Schueller C."/>
            <person name="Wambutt R."/>
            <person name="Murphy G."/>
            <person name="Volckaert G."/>
            <person name="Pohl T."/>
            <person name="Duesterhoeft A."/>
            <person name="Stiekema W."/>
            <person name="Entian K.-D."/>
            <person name="Terryn N."/>
            <person name="Harris B."/>
            <person name="Ansorge W."/>
            <person name="Brandt P."/>
            <person name="Grivell L.A."/>
            <person name="Rieger M."/>
            <person name="Weichselgartner M."/>
            <person name="de Simone V."/>
            <person name="Obermaier B."/>
            <person name="Mache R."/>
            <person name="Mueller M."/>
            <person name="Kreis M."/>
            <person name="Delseny M."/>
            <person name="Puigdomenech P."/>
            <person name="Watson M."/>
            <person name="Schmidtheini T."/>
            <person name="Reichert B."/>
            <person name="Portetelle D."/>
            <person name="Perez-Alonso M."/>
            <person name="Boutry M."/>
            <person name="Bancroft I."/>
            <person name="Vos P."/>
            <person name="Hoheisel J."/>
            <person name="Zimmermann W."/>
            <person name="Wedler H."/>
            <person name="Ridley P."/>
            <person name="Langham S.-A."/>
            <person name="McCullagh B."/>
            <person name="Bilham L."/>
            <person name="Robben J."/>
            <person name="van der Schueren J."/>
            <person name="Grymonprez B."/>
            <person name="Chuang Y.-J."/>
            <person name="Vandenbussche F."/>
            <person name="Braeken M."/>
            <person name="Weltjens I."/>
            <person name="Voet M."/>
            <person name="Bastiaens I."/>
            <person name="Aert R."/>
            <person name="Defoor E."/>
            <person name="Weitzenegger T."/>
            <person name="Bothe G."/>
            <person name="Ramsperger U."/>
            <person name="Hilbert H."/>
            <person name="Braun M."/>
            <person name="Holzer E."/>
            <person name="Brandt A."/>
            <person name="Peters S."/>
            <person name="van Staveren M."/>
            <person name="Dirkse W."/>
            <person name="Mooijman P."/>
            <person name="Klein Lankhorst R."/>
            <person name="Rose M."/>
            <person name="Hauf J."/>
            <person name="Koetter P."/>
            <person name="Berneiser S."/>
            <person name="Hempel S."/>
            <person name="Feldpausch M."/>
            <person name="Lamberth S."/>
            <person name="Van den Daele H."/>
            <person name="De Keyser A."/>
            <person name="Buysshaert C."/>
            <person name="Gielen J."/>
            <person name="Villarroel R."/>
            <person name="De Clercq R."/>
            <person name="van Montagu M."/>
            <person name="Rogers J."/>
            <person name="Cronin A."/>
            <person name="Quail M.A."/>
            <person name="Bray-Allen S."/>
            <person name="Clark L."/>
            <person name="Doggett J."/>
            <person name="Hall S."/>
            <person name="Kay M."/>
            <person name="Lennard N."/>
            <person name="McLay K."/>
            <person name="Mayes R."/>
            <person name="Pettett A."/>
            <person name="Rajandream M.A."/>
            <person name="Lyne M."/>
            <person name="Benes V."/>
            <person name="Rechmann S."/>
            <person name="Borkova D."/>
            <person name="Bloecker H."/>
            <person name="Scharfe M."/>
            <person name="Grimm M."/>
            <person name="Loehnert T.-H."/>
            <person name="Dose S."/>
            <person name="de Haan M."/>
            <person name="Maarse A.C."/>
            <person name="Schaefer M."/>
            <person name="Mueller-Auer S."/>
            <person name="Gabel C."/>
            <person name="Fuchs M."/>
            <person name="Fartmann B."/>
            <person name="Granderath K."/>
            <person name="Dauner D."/>
            <person name="Herzl A."/>
            <person name="Neumann S."/>
            <person name="Argiriou A."/>
            <person name="Vitale D."/>
            <person name="Liguori R."/>
            <person name="Piravandi E."/>
            <person name="Massenet O."/>
            <person name="Quigley F."/>
            <person name="Clabauld G."/>
            <person name="Muendlein A."/>
            <person name="Felber R."/>
            <person name="Schnabl S."/>
            <person name="Hiller R."/>
            <person name="Schmidt W."/>
            <person name="Lecharny A."/>
            <person name="Aubourg S."/>
            <person name="Chefdor F."/>
            <person name="Cooke R."/>
            <person name="Berger C."/>
            <person name="Monfort A."/>
            <person name="Casacuberta E."/>
            <person name="Gibbons T."/>
            <person name="Weber N."/>
            <person name="Vandenbol M."/>
            <person name="Bargues M."/>
            <person name="Terol J."/>
            <person name="Torres A."/>
            <person name="Perez-Perez A."/>
            <person name="Purnelle B."/>
            <person name="Bent E."/>
            <person name="Johnson S."/>
            <person name="Tacon D."/>
            <person name="Jesse T."/>
            <person name="Heijnen L."/>
            <person name="Schwarz S."/>
            <person name="Scholler P."/>
            <person name="Heber S."/>
            <person name="Francs P."/>
            <person name="Bielke C."/>
            <person name="Frishman D."/>
            <person name="Haase D."/>
            <person name="Lemcke K."/>
            <person name="Mewes H.-W."/>
            <person name="Stocker S."/>
            <person name="Zaccaria P."/>
            <person name="Bevan M."/>
            <person name="Wilson R.K."/>
            <person name="de la Bastide M."/>
            <person name="Habermann K."/>
            <person name="Parnell L."/>
            <person name="Dedhia N."/>
            <person name="Gnoj L."/>
            <person name="Schutz K."/>
            <person name="Huang E."/>
            <person name="Spiegel L."/>
            <person name="Sekhon M."/>
            <person name="Murray J."/>
            <person name="Sheet P."/>
            <person name="Cordes M."/>
            <person name="Abu-Threideh J."/>
            <person name="Stoneking T."/>
            <person name="Kalicki J."/>
            <person name="Graves T."/>
            <person name="Harmon G."/>
            <person name="Edwards J."/>
            <person name="Latreille P."/>
            <person name="Courtney L."/>
            <person name="Cloud J."/>
            <person name="Abbott A."/>
            <person name="Scott K."/>
            <person name="Johnson D."/>
            <person name="Minx P."/>
            <person name="Bentley D."/>
            <person name="Fulton B."/>
            <person name="Miller N."/>
            <person name="Greco T."/>
            <person name="Kemp K."/>
            <person name="Kramer J."/>
            <person name="Fulton L."/>
            <person name="Mardis E."/>
            <person name="Dante M."/>
            <person name="Pepin K."/>
            <person name="Hillier L.W."/>
            <person name="Nelson J."/>
            <person name="Spieth J."/>
            <person name="Ryan E."/>
            <person name="Andrews S."/>
            <person name="Geisel C."/>
            <person name="Layman D."/>
            <person name="Du H."/>
            <person name="Ali J."/>
            <person name="Berghoff A."/>
            <person name="Jones K."/>
            <person name="Drone K."/>
            <person name="Cotton M."/>
            <person name="Joshu C."/>
            <person name="Antonoiu B."/>
            <person name="Zidanic M."/>
            <person name="Strong C."/>
            <person name="Sun H."/>
            <person name="Lamar B."/>
            <person name="Yordan C."/>
            <person name="Ma P."/>
            <person name="Zhong J."/>
            <person name="Preston R."/>
            <person name="Vil D."/>
            <person name="Shekher M."/>
            <person name="Matero A."/>
            <person name="Shah R."/>
            <person name="Swaby I.K."/>
            <person name="O'Shaughnessy A."/>
            <person name="Rodriguez M."/>
            <person name="Hoffman J."/>
            <person name="Till S."/>
            <person name="Granat S."/>
            <person name="Shohdy N."/>
            <person name="Hasegawa A."/>
            <person name="Hameed A."/>
            <person name="Lodhi M."/>
            <person name="Johnson A."/>
            <person name="Chen E."/>
            <person name="Marra M.A."/>
            <person name="Martienssen R."/>
            <person name="McCombie W.R."/>
        </authorList>
    </citation>
    <scope>NUCLEOTIDE SEQUENCE [LARGE SCALE GENOMIC DNA]</scope>
    <source>
        <strain>cv. Columbia</strain>
    </source>
</reference>
<reference key="4">
    <citation type="journal article" date="2017" name="Plant J.">
        <title>Araport11: a complete reannotation of the Arabidopsis thaliana reference genome.</title>
        <authorList>
            <person name="Cheng C.Y."/>
            <person name="Krishnakumar V."/>
            <person name="Chan A.P."/>
            <person name="Thibaud-Nissen F."/>
            <person name="Schobel S."/>
            <person name="Town C.D."/>
        </authorList>
    </citation>
    <scope>GENOME REANNOTATION</scope>
    <source>
        <strain>cv. Columbia</strain>
    </source>
</reference>
<reference key="5">
    <citation type="journal article" date="2003" name="Science">
        <title>Empirical analysis of transcriptional activity in the Arabidopsis genome.</title>
        <authorList>
            <person name="Yamada K."/>
            <person name="Lim J."/>
            <person name="Dale J.M."/>
            <person name="Chen H."/>
            <person name="Shinn P."/>
            <person name="Palm C.J."/>
            <person name="Southwick A.M."/>
            <person name="Wu H.C."/>
            <person name="Kim C.J."/>
            <person name="Nguyen M."/>
            <person name="Pham P.K."/>
            <person name="Cheuk R.F."/>
            <person name="Karlin-Newmann G."/>
            <person name="Liu S.X."/>
            <person name="Lam B."/>
            <person name="Sakano H."/>
            <person name="Wu T."/>
            <person name="Yu G."/>
            <person name="Miranda M."/>
            <person name="Quach H.L."/>
            <person name="Tripp M."/>
            <person name="Chang C.H."/>
            <person name="Lee J.M."/>
            <person name="Toriumi M.J."/>
            <person name="Chan M.M."/>
            <person name="Tang C.C."/>
            <person name="Onodera C.S."/>
            <person name="Deng J.M."/>
            <person name="Akiyama K."/>
            <person name="Ansari Y."/>
            <person name="Arakawa T."/>
            <person name="Banh J."/>
            <person name="Banno F."/>
            <person name="Bowser L."/>
            <person name="Brooks S.Y."/>
            <person name="Carninci P."/>
            <person name="Chao Q."/>
            <person name="Choy N."/>
            <person name="Enju A."/>
            <person name="Goldsmith A.D."/>
            <person name="Gurjal M."/>
            <person name="Hansen N.F."/>
            <person name="Hayashizaki Y."/>
            <person name="Johnson-Hopson C."/>
            <person name="Hsuan V.W."/>
            <person name="Iida K."/>
            <person name="Karnes M."/>
            <person name="Khan S."/>
            <person name="Koesema E."/>
            <person name="Ishida J."/>
            <person name="Jiang P.X."/>
            <person name="Jones T."/>
            <person name="Kawai J."/>
            <person name="Kamiya A."/>
            <person name="Meyers C."/>
            <person name="Nakajima M."/>
            <person name="Narusaka M."/>
            <person name="Seki M."/>
            <person name="Sakurai T."/>
            <person name="Satou M."/>
            <person name="Tamse R."/>
            <person name="Vaysberg M."/>
            <person name="Wallender E.K."/>
            <person name="Wong C."/>
            <person name="Yamamura Y."/>
            <person name="Yuan S."/>
            <person name="Shinozaki K."/>
            <person name="Davis R.W."/>
            <person name="Theologis A."/>
            <person name="Ecker J.R."/>
        </authorList>
    </citation>
    <scope>NUCLEOTIDE SEQUENCE [LARGE SCALE MRNA]</scope>
    <source>
        <strain>cv. Columbia</strain>
    </source>
</reference>
<reference key="6">
    <citation type="journal article" date="1998" name="Plant J.">
        <title>Towards functional characterisation of the members of the R2R3-MYB gene family from Arabidopsis thaliana.</title>
        <authorList>
            <person name="Kranz H.D."/>
            <person name="Denekamp M."/>
            <person name="Greco R."/>
            <person name="Jin H.-L."/>
            <person name="Leyva A."/>
            <person name="Meissner R.C."/>
            <person name="Petroni K."/>
            <person name="Urzainqui A."/>
            <person name="Bevan M."/>
            <person name="Martin C."/>
            <person name="Smeekens S."/>
            <person name="Tonelli C."/>
            <person name="Paz-Ares J."/>
            <person name="Weisshaar B."/>
        </authorList>
    </citation>
    <scope>NUCLEOTIDE SEQUENCE [MRNA] OF 53-320</scope>
    <source>
        <strain>cv. Columbia</strain>
    </source>
</reference>
<reference key="7">
    <citation type="journal article" date="2001" name="Curr. Opin. Plant Biol.">
        <title>The R2R3-MYB gene family in Arabidopsis thaliana.</title>
        <authorList>
            <person name="Stracke R."/>
            <person name="Werber M."/>
            <person name="Weisshaar B."/>
        </authorList>
    </citation>
    <scope>GENE FAMILY</scope>
    <scope>NOMENCLATURE</scope>
</reference>
<reference key="8">
    <citation type="journal article" date="2013" name="J. Plant Physiol.">
        <title>Loss of the R2R3 MYB, AtMyb73, causes hyper-induction of the SOS1 and SOS3 genes in response to high salinity in Arabidopsis.</title>
        <authorList>
            <person name="Kim J.H."/>
            <person name="Nguyen N.H."/>
            <person name="Jeong C.Y."/>
            <person name="Nguyen N.T."/>
            <person name="Hong S.W."/>
            <person name="Lee H."/>
        </authorList>
    </citation>
    <scope>FUNCTION</scope>
    <scope>SUBCELLULAR LOCATION</scope>
    <scope>INDUCTION BY SALT STRESS</scope>
    <scope>DISRUPTION PHENOTYPE</scope>
</reference>
<reference key="9">
    <citation type="journal article" date="2014" name="Sci. Signal.">
        <title>The ABA receptor PYL8 promotes lateral root growth by enhancing MYB77-dependent transcription of auxin-responsive genes.</title>
        <authorList>
            <person name="Zhao Y."/>
            <person name="Xing L."/>
            <person name="Wang X."/>
            <person name="Hou Y.J."/>
            <person name="Gao J."/>
            <person name="Wang P."/>
            <person name="Duan C.G."/>
            <person name="Zhu X."/>
            <person name="Zhu J.K."/>
        </authorList>
    </citation>
    <scope>FUNCTION</scope>
    <scope>INTERACTION WITH PYL8</scope>
</reference>
<accession>O23160</accession>
<accession>Q9SBF6</accession>
<comment type="function">
    <text evidence="3 4">Transcription factor that functions in salt stress response. Acts as a negative regulator of NHX7/SOS1 and CBL4/SOS3 induction in response to salt stress (PubMed:23809151). In response to auxin, activates the transcription of the auxin-responsive gene IAA19. The IAA19 transcription activation by MYB73 is enhanced by direct interaction between MYB73 and PYL8 (PubMed:24894996).</text>
</comment>
<comment type="subunit">
    <text evidence="4">Interacts with PYL8.</text>
</comment>
<comment type="interaction">
    <interactant intactId="EBI-25506855">
        <id>O23160</id>
    </interactant>
    <interactant intactId="EBI-1778843">
        <id>Q9S7Z2</id>
        <label>AFP4</label>
    </interactant>
    <organismsDiffer>false</organismsDiffer>
    <experiments>3</experiments>
</comment>
<comment type="interaction">
    <interactant intactId="EBI-25506855">
        <id>O23160</id>
    </interactant>
    <interactant intactId="EBI-1100687">
        <id>Q9ZNV8</id>
        <label>AHP2</label>
    </interactant>
    <organismsDiffer>false</organismsDiffer>
    <experiments>3</experiments>
</comment>
<comment type="interaction">
    <interactant intactId="EBI-25506855">
        <id>O23160</id>
    </interactant>
    <interactant intactId="EBI-1100711">
        <id>Q9SAZ5</id>
        <label>AHP3</label>
    </interactant>
    <organismsDiffer>false</organismsDiffer>
    <experiments>3</experiments>
</comment>
<comment type="interaction">
    <interactant intactId="EBI-25506855">
        <id>O23160</id>
    </interactant>
    <interactant intactId="EBI-1573499">
        <id>Q9LNW3</id>
        <label>AIP1</label>
    </interactant>
    <organismsDiffer>false</organismsDiffer>
    <experiments>3</experiments>
</comment>
<comment type="interaction">
    <interactant intactId="EBI-25506855">
        <id>O23160</id>
    </interactant>
    <interactant intactId="EBI-1100737">
        <id>Q8L9Y3</id>
        <label>ARR14</label>
    </interactant>
    <organismsDiffer>false</organismsDiffer>
    <experiments>5</experiments>
</comment>
<comment type="interaction">
    <interactant intactId="EBI-25506855">
        <id>O23160</id>
    </interactant>
    <interactant intactId="EBI-763232">
        <id>O80931</id>
        <label>AS1</label>
    </interactant>
    <organismsDiffer>false</organismsDiffer>
    <experiments>3</experiments>
</comment>
<comment type="interaction">
    <interactant intactId="EBI-25506855">
        <id>O23160</id>
    </interactant>
    <interactant intactId="EBI-25516668">
        <id>Q9LML3</id>
        <label>At1g07210</label>
    </interactant>
    <organismsDiffer>false</organismsDiffer>
    <experiments>3</experiments>
</comment>
<comment type="interaction">
    <interactant intactId="EBI-25506855">
        <id>O23160</id>
    </interactant>
    <interactant intactId="EBI-25517084">
        <id>A0A178WAA1</id>
        <label>At1g10650</label>
    </interactant>
    <organismsDiffer>false</organismsDiffer>
    <experiments>3</experiments>
</comment>
<comment type="interaction">
    <interactant intactId="EBI-25506855">
        <id>O23160</id>
    </interactant>
    <interactant intactId="EBI-25516058">
        <id>F4HZI8</id>
        <label>At1g15200</label>
    </interactant>
    <organismsDiffer>false</organismsDiffer>
    <experiments>3</experiments>
</comment>
<comment type="interaction">
    <interactant intactId="EBI-25506855">
        <id>O23160</id>
    </interactant>
    <interactant intactId="EBI-4458581">
        <id>Q9C5J5</id>
        <label>At1g19010</label>
    </interactant>
    <organismsDiffer>false</organismsDiffer>
    <experiments>3</experiments>
</comment>
<comment type="interaction">
    <interactant intactId="EBI-25506855">
        <id>O23160</id>
    </interactant>
    <interactant intactId="EBI-25516482">
        <id>A0A178WDD2</id>
        <label>At1g51580</label>
    </interactant>
    <organismsDiffer>false</organismsDiffer>
    <experiments>3</experiments>
</comment>
<comment type="interaction">
    <interactant intactId="EBI-25506855">
        <id>O23160</id>
    </interactant>
    <interactant intactId="EBI-25516987">
        <id>Q9SLL2</id>
        <label>At1g54200</label>
    </interactant>
    <organismsDiffer>false</organismsDiffer>
    <experiments>3</experiments>
</comment>
<comment type="interaction">
    <interactant intactId="EBI-25506855">
        <id>O23160</id>
    </interactant>
    <interactant intactId="EBI-4439204">
        <id>Q9CA23</id>
        <label>At1g77710</label>
    </interactant>
    <organismsDiffer>false</organismsDiffer>
    <experiments>3</experiments>
</comment>
<comment type="interaction">
    <interactant intactId="EBI-25506855">
        <id>O23160</id>
    </interactant>
    <interactant intactId="EBI-4426341">
        <id>Q84J71</id>
        <label>At2g17670</label>
    </interactant>
    <organismsDiffer>false</organismsDiffer>
    <experiments>3</experiments>
</comment>
<comment type="interaction">
    <interactant intactId="EBI-25506855">
        <id>O23160</id>
    </interactant>
    <interactant intactId="EBI-25516958">
        <id>Q9SIR8</id>
        <label>At2g25250</label>
    </interactant>
    <organismsDiffer>false</organismsDiffer>
    <experiments>3</experiments>
</comment>
<comment type="interaction">
    <interactant intactId="EBI-25506855">
        <id>O23160</id>
    </interactant>
    <interactant intactId="EBI-4441103">
        <id>Q9ZW21</id>
        <label>At2g29380</label>
    </interactant>
    <organismsDiffer>false</organismsDiffer>
    <experiments>3</experiments>
</comment>
<comment type="interaction">
    <interactant intactId="EBI-25506855">
        <id>O23160</id>
    </interactant>
    <interactant intactId="EBI-4425722">
        <id>O48852</id>
        <label>At2g32650</label>
    </interactant>
    <organismsDiffer>false</organismsDiffer>
    <experiments>3</experiments>
</comment>
<comment type="interaction">
    <interactant intactId="EBI-25506855">
        <id>O23160</id>
    </interactant>
    <interactant intactId="EBI-4428262">
        <id>Q8VZ73</id>
        <label>At2g39100</label>
    </interactant>
    <organismsDiffer>false</organismsDiffer>
    <experiments>3</experiments>
</comment>
<comment type="interaction">
    <interactant intactId="EBI-25506855">
        <id>O23160</id>
    </interactant>
    <interactant intactId="EBI-4436207">
        <id>Q9M9W9</id>
        <label>At3g05640</label>
    </interactant>
    <organismsDiffer>false</organismsDiffer>
    <experiments>3</experiments>
</comment>
<comment type="interaction">
    <interactant intactId="EBI-25506855">
        <id>O23160</id>
    </interactant>
    <interactant intactId="EBI-4453220">
        <id>Q9LJL8</id>
        <label>At3g19120</label>
    </interactant>
    <organismsDiffer>false</organismsDiffer>
    <experiments>3</experiments>
</comment>
<comment type="interaction">
    <interactant intactId="EBI-25506855">
        <id>O23160</id>
    </interactant>
    <interactant intactId="EBI-25517043">
        <id>A0A384KYS8</id>
        <label>At3g48510</label>
    </interactant>
    <organismsDiffer>false</organismsDiffer>
    <experiments>3</experiments>
</comment>
<comment type="interaction">
    <interactant intactId="EBI-25506855">
        <id>O23160</id>
    </interactant>
    <interactant intactId="EBI-25516347">
        <id>Q94C11</id>
        <label>At3g52120</label>
    </interactant>
    <organismsDiffer>false</organismsDiffer>
    <experiments>3</experiments>
</comment>
<comment type="interaction">
    <interactant intactId="EBI-25506855">
        <id>O23160</id>
    </interactant>
    <interactant intactId="EBI-4436982">
        <id>Q9M223</id>
        <label>At3g60360</label>
    </interactant>
    <organismsDiffer>false</organismsDiffer>
    <experiments>3</experiments>
</comment>
<comment type="interaction">
    <interactant intactId="EBI-25506855">
        <id>O23160</id>
    </interactant>
    <interactant intactId="EBI-4446515">
        <id>Q8L603</id>
        <label>At4g20300</label>
    </interactant>
    <organismsDiffer>false</organismsDiffer>
    <experiments>3</experiments>
</comment>
<comment type="interaction">
    <interactant intactId="EBI-25506855">
        <id>O23160</id>
    </interactant>
    <interactant intactId="EBI-3387100">
        <id>Q9FMT4</id>
        <label>At5g14170</label>
    </interactant>
    <organismsDiffer>false</organismsDiffer>
    <experiments>3</experiments>
</comment>
<comment type="interaction">
    <interactant intactId="EBI-25506855">
        <id>O23160</id>
    </interactant>
    <interactant intactId="EBI-25516100">
        <id>Q9XFH9</id>
        <label>At5g16400</label>
    </interactant>
    <organismsDiffer>false</organismsDiffer>
    <experiments>3</experiments>
</comment>
<comment type="interaction">
    <interactant intactId="EBI-25506855">
        <id>O23160</id>
    </interactant>
    <interactant intactId="EBI-25517212">
        <id>Q93WB2</id>
        <label>At5g25280</label>
    </interactant>
    <organismsDiffer>false</organismsDiffer>
    <experiments>3</experiments>
</comment>
<comment type="interaction">
    <interactant intactId="EBI-25506855">
        <id>O23160</id>
    </interactant>
    <interactant intactId="EBI-25516711">
        <id>Q6AWV7</id>
        <label>At5g48335</label>
    </interactant>
    <organismsDiffer>false</organismsDiffer>
    <experiments>3</experiments>
</comment>
<comment type="interaction">
    <interactant intactId="EBI-25506855">
        <id>O23160</id>
    </interactant>
    <interactant intactId="EBI-4436601">
        <id>Q945P2</id>
        <label>At5g49210</label>
    </interactant>
    <organismsDiffer>false</organismsDiffer>
    <experiments>3</experiments>
</comment>
<comment type="interaction">
    <interactant intactId="EBI-25506855">
        <id>O23160</id>
    </interactant>
    <interactant intactId="EBI-25512586">
        <id>A0A178UNT9</id>
        <label>At5g58950</label>
    </interactant>
    <organismsDiffer>false</organismsDiffer>
    <experiments>5</experiments>
</comment>
<comment type="interaction">
    <interactant intactId="EBI-25506855">
        <id>O23160</id>
    </interactant>
    <interactant intactId="EBI-25516722">
        <id>A0A178UGH4</id>
        <label>At5g62770</label>
    </interactant>
    <organismsDiffer>false</organismsDiffer>
    <experiments>3</experiments>
</comment>
<comment type="interaction">
    <interactant intactId="EBI-25506855">
        <id>O23160</id>
    </interactant>
    <interactant intactId="EBI-25516560">
        <id>Q9SSS9</id>
        <label>ATPD</label>
    </interactant>
    <organismsDiffer>false</organismsDiffer>
    <experiments>3</experiments>
</comment>
<comment type="interaction">
    <interactant intactId="EBI-25506855">
        <id>O23160</id>
    </interactant>
    <interactant intactId="EBI-25517163">
        <id>Q683C9</id>
        <label>AUR2</label>
    </interactant>
    <organismsDiffer>false</organismsDiffer>
    <experiments>3</experiments>
</comment>
<comment type="interaction">
    <interactant intactId="EBI-25506855">
        <id>O23160</id>
    </interactant>
    <interactant intactId="EBI-25515760">
        <id>A0A178W725</id>
        <label>AXX17_At1g45300</label>
    </interactant>
    <organismsDiffer>false</organismsDiffer>
    <experiments>3</experiments>
</comment>
<comment type="interaction">
    <interactant intactId="EBI-25506855">
        <id>O23160</id>
    </interactant>
    <interactant intactId="EBI-25517004">
        <id>A0A384L1W6</id>
        <label>AXX17_At3g01680</label>
    </interactant>
    <organismsDiffer>false</organismsDiffer>
    <experiments>3</experiments>
</comment>
<comment type="interaction">
    <interactant intactId="EBI-25506855">
        <id>O23160</id>
    </interactant>
    <interactant intactId="EBI-25516699">
        <id>A0A384KR51</id>
        <label>AXX17_At3g18680</label>
    </interactant>
    <organismsDiffer>false</organismsDiffer>
    <experiments>3</experiments>
</comment>
<comment type="interaction">
    <interactant intactId="EBI-25506855">
        <id>O23160</id>
    </interactant>
    <interactant intactId="EBI-25516796">
        <id>A0A384LH69</id>
        <label>AXX17_At3g52300</label>
    </interactant>
    <organismsDiffer>false</organismsDiffer>
    <experiments>3</experiments>
</comment>
<comment type="interaction">
    <interactant intactId="EBI-25506855">
        <id>O23160</id>
    </interactant>
    <interactant intactId="EBI-25517103">
        <id>A0A384L3L6</id>
        <label>AXX17_At3g52320</label>
    </interactant>
    <organismsDiffer>false</organismsDiffer>
    <experiments>3</experiments>
</comment>
<comment type="interaction">
    <interactant intactId="EBI-25506855">
        <id>O23160</id>
    </interactant>
    <interactant intactId="EBI-25516521">
        <id>A0A384KDW9</id>
        <label>AXX17_At4g21580</label>
    </interactant>
    <organismsDiffer>false</organismsDiffer>
    <experiments>3</experiments>
</comment>
<comment type="interaction">
    <interactant intactId="EBI-25506855">
        <id>O23160</id>
    </interactant>
    <interactant intactId="EBI-25517060">
        <id>Q93YV6</id>
        <label>B'KAPPA</label>
    </interactant>
    <organismsDiffer>false</organismsDiffer>
    <experiments>3</experiments>
</comment>
<comment type="interaction">
    <interactant intactId="EBI-25506855">
        <id>O23160</id>
    </interactant>
    <interactant intactId="EBI-4425264">
        <id>Q9LJB7</id>
        <label>BBX32</label>
    </interactant>
    <organismsDiffer>false</organismsDiffer>
    <experiments>3</experiments>
</comment>
<comment type="interaction">
    <interactant intactId="EBI-25506855">
        <id>O23160</id>
    </interactant>
    <interactant intactId="EBI-537638">
        <id>O22932</id>
        <label>CIPK11</label>
    </interactant>
    <organismsDiffer>false</organismsDiffer>
    <experiments>3</experiments>
</comment>
<comment type="interaction">
    <interactant intactId="EBI-25506855">
        <id>O23160</id>
    </interactant>
    <interactant intactId="EBI-637523">
        <id>Q9SN43</id>
        <label>CIPK12</label>
    </interactant>
    <organismsDiffer>false</organismsDiffer>
    <experiments>3</experiments>
</comment>
<comment type="interaction">
    <interactant intactId="EBI-25506855">
        <id>O23160</id>
    </interactant>
    <interactant intactId="EBI-1573415">
        <id>Q9SEZ7</id>
        <label>CIPK16</label>
    </interactant>
    <organismsDiffer>false</organismsDiffer>
    <experiments>3</experiments>
</comment>
<comment type="interaction">
    <interactant intactId="EBI-25506855">
        <id>O23160</id>
    </interactant>
    <interactant intactId="EBI-1765282">
        <id>Q9MAM1</id>
        <label>CIPK9</label>
    </interactant>
    <organismsDiffer>false</organismsDiffer>
    <experiments>5</experiments>
</comment>
<comment type="interaction">
    <interactant intactId="EBI-25506855">
        <id>O23160</id>
    </interactant>
    <interactant intactId="EBI-25516910">
        <id>Q8LPI7</id>
        <label>CKL4</label>
    </interactant>
    <organismsDiffer>false</organismsDiffer>
    <experiments>3</experiments>
</comment>
<comment type="interaction">
    <interactant intactId="EBI-25506855">
        <id>O23160</id>
    </interactant>
    <interactant intactId="EBI-25516197">
        <id>Q8L8T7</id>
        <label>COR27</label>
    </interactant>
    <organismsDiffer>false</organismsDiffer>
    <experiments>3</experiments>
</comment>
<comment type="interaction">
    <interactant intactId="EBI-25506855">
        <id>O23160</id>
    </interactant>
    <interactant intactId="EBI-4428219">
        <id>P0DO23</id>
        <label>CP2</label>
    </interactant>
    <organismsDiffer>false</organismsDiffer>
    <experiments>3</experiments>
</comment>
<comment type="interaction">
    <interactant intactId="EBI-25506855">
        <id>O23160</id>
    </interactant>
    <interactant intactId="EBI-4456165">
        <id>Q9LFR7</id>
        <label>CXE17</label>
    </interactant>
    <organismsDiffer>false</organismsDiffer>
    <experiments>3</experiments>
</comment>
<comment type="interaction">
    <interactant intactId="EBI-25506855">
        <id>O23160</id>
    </interactant>
    <interactant intactId="EBI-25516637">
        <id>Q6NM52</id>
        <label>DL3925W</label>
    </interactant>
    <organismsDiffer>false</organismsDiffer>
    <experiments>3</experiments>
</comment>
<comment type="interaction">
    <interactant intactId="EBI-25506855">
        <id>O23160</id>
    </interactant>
    <interactant intactId="EBI-401198">
        <id>Q9SKK0</id>
        <label>EBF1</label>
    </interactant>
    <organismsDiffer>false</organismsDiffer>
    <experiments>3</experiments>
</comment>
<comment type="interaction">
    <interactant intactId="EBI-25506855">
        <id>O23160</id>
    </interactant>
    <interactant intactId="EBI-25516971">
        <id>Q56XH8</id>
        <label>ECT11</label>
    </interactant>
    <organismsDiffer>false</organismsDiffer>
    <experiments>3</experiments>
</comment>
<comment type="interaction">
    <interactant intactId="EBI-25506855">
        <id>O23160</id>
    </interactant>
    <interactant intactId="EBI-2130789">
        <id>Q41969</id>
        <label>EIF2B</label>
    </interactant>
    <organismsDiffer>false</organismsDiffer>
    <experiments>3</experiments>
</comment>
<comment type="interaction">
    <interactant intactId="EBI-25506855">
        <id>O23160</id>
    </interactant>
    <interactant intactId="EBI-2359499">
        <id>O23252</id>
        <label>EIF4E1</label>
    </interactant>
    <organismsDiffer>false</organismsDiffer>
    <experiments>3</experiments>
</comment>
<comment type="interaction">
    <interactant intactId="EBI-25506855">
        <id>O23160</id>
    </interactant>
    <interactant intactId="EBI-4427894">
        <id>Q9SQU6</id>
        <label>EMB2750</label>
    </interactant>
    <organismsDiffer>false</organismsDiffer>
    <experiments>3</experiments>
</comment>
<comment type="interaction">
    <interactant intactId="EBI-25506855">
        <id>O23160</id>
    </interactant>
    <interactant intactId="EBI-25516817">
        <id>Q9LK52</id>
        <label>EMB2769</label>
    </interactant>
    <organismsDiffer>false</organismsDiffer>
    <experiments>3</experiments>
</comment>
<comment type="interaction">
    <interactant intactId="EBI-25506855">
        <id>O23160</id>
    </interactant>
    <interactant intactId="EBI-2000137">
        <id>Q9MAI5</id>
        <label>ERF8</label>
    </interactant>
    <organismsDiffer>false</organismsDiffer>
    <experiments>5</experiments>
</comment>
<comment type="interaction">
    <interactant intactId="EBI-25506855">
        <id>O23160</id>
    </interactant>
    <interactant intactId="EBI-4429105">
        <id>Q9FNR3</id>
        <label>EXO70E2</label>
    </interactant>
    <organismsDiffer>false</organismsDiffer>
    <experiments>3</experiments>
</comment>
<comment type="interaction">
    <interactant intactId="EBI-25506855">
        <id>O23160</id>
    </interactant>
    <interactant intactId="EBI-4470389">
        <id>Q8VY27</id>
        <label>EXO70H1</label>
    </interactant>
    <organismsDiffer>false</organismsDiffer>
    <experiments>3</experiments>
</comment>
<comment type="interaction">
    <interactant intactId="EBI-25506855">
        <id>O23160</id>
    </interactant>
    <interactant intactId="EBI-25516131">
        <id>Q9FN91</id>
        <label>EXO70H7</label>
    </interactant>
    <organismsDiffer>false</organismsDiffer>
    <experiments>3</experiments>
</comment>
<comment type="interaction">
    <interactant intactId="EBI-25506855">
        <id>O23160</id>
    </interactant>
    <interactant intactId="EBI-4428777">
        <id>Q9S7U7</id>
        <label>F28J7.1</label>
    </interactant>
    <organismsDiffer>false</organismsDiffer>
    <experiments>3</experiments>
</comment>
<comment type="interaction">
    <interactant intactId="EBI-25506855">
        <id>O23160</id>
    </interactant>
    <interactant intactId="EBI-2895757">
        <id>Q9SCY2</id>
        <label>FKBP13</label>
    </interactant>
    <organismsDiffer>false</organismsDiffer>
    <experiments>3</experiments>
</comment>
<comment type="interaction">
    <interactant intactId="EBI-25506855">
        <id>O23160</id>
    </interactant>
    <interactant intactId="EBI-446380">
        <id>Q9SQI2</id>
        <label>GI</label>
    </interactant>
    <organismsDiffer>false</organismsDiffer>
    <experiments>3</experiments>
</comment>
<comment type="interaction">
    <interactant intactId="EBI-25506855">
        <id>O23160</id>
    </interactant>
    <interactant intactId="EBI-4434651">
        <id>Q8LF89</id>
        <label>GRXC8</label>
    </interactant>
    <organismsDiffer>false</organismsDiffer>
    <experiments>3</experiments>
</comment>
<comment type="interaction">
    <interactant intactId="EBI-25506855">
        <id>O23160</id>
    </interactant>
    <interactant intactId="EBI-25517023">
        <id>Q39117</id>
        <label>GT-2</label>
    </interactant>
    <organismsDiffer>false</organismsDiffer>
    <experiments>3</experiments>
</comment>
<comment type="interaction">
    <interactant intactId="EBI-25506855">
        <id>O23160</id>
    </interactant>
    <interactant intactId="EBI-3946434">
        <id>Q38828</id>
        <label>IAA10</label>
    </interactant>
    <organismsDiffer>false</organismsDiffer>
    <experiments>3</experiments>
</comment>
<comment type="interaction">
    <interactant intactId="EBI-25506855">
        <id>O23160</id>
    </interactant>
    <interactant intactId="EBI-25524519">
        <id>A0A2H1ZEF6</id>
        <label>IAA15</label>
    </interactant>
    <organismsDiffer>false</organismsDiffer>
    <experiments>3</experiments>
</comment>
<comment type="interaction">
    <interactant intactId="EBI-25506855">
        <id>O23160</id>
    </interactant>
    <interactant intactId="EBI-3947418">
        <id>Q8LAL2</id>
        <label>IAA26</label>
    </interactant>
    <organismsDiffer>false</organismsDiffer>
    <experiments>3</experiments>
</comment>
<comment type="interaction">
    <interactant intactId="EBI-25506855">
        <id>O23160</id>
    </interactant>
    <interactant intactId="EBI-307174">
        <id>Q38822</id>
        <label>IAA3</label>
    </interactant>
    <organismsDiffer>false</organismsDiffer>
    <experiments>3</experiments>
</comment>
<comment type="interaction">
    <interactant intactId="EBI-25506855">
        <id>O23160</id>
    </interactant>
    <interactant intactId="EBI-3946408">
        <id>Q8H174</id>
        <label>IAA31</label>
    </interactant>
    <organismsDiffer>false</organismsDiffer>
    <experiments>3</experiments>
</comment>
<comment type="interaction">
    <interactant intactId="EBI-25506855">
        <id>O23160</id>
    </interactant>
    <interactant intactId="EBI-3946459">
        <id>Q9C5X0</id>
        <label>IAA34</label>
    </interactant>
    <organismsDiffer>false</organismsDiffer>
    <experiments>3</experiments>
</comment>
<comment type="interaction">
    <interactant intactId="EBI-25506855">
        <id>O23160</id>
    </interactant>
    <interactant intactId="EBI-632187">
        <id>P33077</id>
        <label>IAA4</label>
    </interactant>
    <organismsDiffer>false</organismsDiffer>
    <experiments>3</experiments>
</comment>
<comment type="interaction">
    <interactant intactId="EBI-25506855">
        <id>O23160</id>
    </interactant>
    <interactant intactId="EBI-3946487">
        <id>P33078</id>
        <label>IAA5</label>
    </interactant>
    <organismsDiffer>false</organismsDiffer>
    <experiments>3</experiments>
</comment>
<comment type="interaction">
    <interactant intactId="EBI-25506855">
        <id>O23160</id>
    </interactant>
    <interactant intactId="EBI-1554124">
        <id>Q38824</id>
        <label>IAA6</label>
    </interactant>
    <organismsDiffer>false</organismsDiffer>
    <experiments>3</experiments>
</comment>
<comment type="interaction">
    <interactant intactId="EBI-25506855">
        <id>O23160</id>
    </interactant>
    <interactant intactId="EBI-632216">
        <id>Q38827</id>
        <label>IAA9</label>
    </interactant>
    <organismsDiffer>false</organismsDiffer>
    <experiments>3</experiments>
</comment>
<comment type="interaction">
    <interactant intactId="EBI-25506855">
        <id>O23160</id>
    </interactant>
    <interactant intactId="EBI-1253508">
        <id>F4JL11</id>
        <label>IMPA2</label>
    </interactant>
    <organismsDiffer>false</organismsDiffer>
    <experiments>3</experiments>
</comment>
<comment type="interaction">
    <interactant intactId="EBI-25506855">
        <id>O23160</id>
    </interactant>
    <interactant intactId="EBI-1644689">
        <id>O04294</id>
        <label>IMPA3</label>
    </interactant>
    <organismsDiffer>false</organismsDiffer>
    <experiments>3</experiments>
</comment>
<comment type="interaction">
    <interactant intactId="EBI-25506855">
        <id>O23160</id>
    </interactant>
    <interactant intactId="EBI-25517196">
        <id>Q9CAI2</id>
        <label>IQD8</label>
    </interactant>
    <organismsDiffer>false</organismsDiffer>
    <experiments>3</experiments>
</comment>
<comment type="interaction">
    <interactant intactId="EBI-25506855">
        <id>O23160</id>
    </interactant>
    <interactant intactId="EBI-25516330">
        <id>Q9SZZ5</id>
        <label>L73G19.50</label>
    </interactant>
    <organismsDiffer>false</organismsDiffer>
    <experiments>3</experiments>
</comment>
<comment type="interaction">
    <interactant intactId="EBI-25506855">
        <id>O23160</id>
    </interactant>
    <interactant intactId="EBI-2309089">
        <id>Q946J8</id>
        <label>LHP1</label>
    </interactant>
    <organismsDiffer>false</organismsDiffer>
    <experiments>3</experiments>
</comment>
<comment type="interaction">
    <interactant intactId="EBI-25506855">
        <id>O23160</id>
    </interactant>
    <interactant intactId="EBI-16419411">
        <id>F4K4E3</id>
        <label>LSM4</label>
    </interactant>
    <organismsDiffer>false</organismsDiffer>
    <experiments>3</experiments>
</comment>
<comment type="interaction">
    <interactant intactId="EBI-25506855">
        <id>O23160</id>
    </interactant>
    <interactant intactId="EBI-4453099">
        <id>Q9LV27</id>
        <label>LST8-1</label>
    </interactant>
    <organismsDiffer>false</organismsDiffer>
    <experiments>3</experiments>
</comment>
<comment type="interaction">
    <interactant intactId="EBI-25506855">
        <id>O23160</id>
    </interactant>
    <interactant intactId="EBI-4443810">
        <id>O23676</id>
        <label>MAGO</label>
    </interactant>
    <organismsDiffer>false</organismsDiffer>
    <experiments>3</experiments>
</comment>
<comment type="interaction">
    <interactant intactId="EBI-25506855">
        <id>O23160</id>
    </interactant>
    <interactant intactId="EBI-15211238">
        <id>Q9FFJ9</id>
        <label>MJJ3.20</label>
    </interactant>
    <organismsDiffer>false</organismsDiffer>
    <experiments>3</experiments>
</comment>
<comment type="interaction">
    <interactant intactId="EBI-25506855">
        <id>O23160</id>
    </interactant>
    <interactant intactId="EBI-2358409">
        <id>O80397</id>
        <label>MKK4</label>
    </interactant>
    <organismsDiffer>false</organismsDiffer>
    <experiments>5</experiments>
</comment>
<comment type="interaction">
    <interactant intactId="EBI-25506855">
        <id>O23160</id>
    </interactant>
    <interactant intactId="EBI-1998046">
        <id>O22793</id>
        <label>MORF2</label>
    </interactant>
    <organismsDiffer>false</organismsDiffer>
    <experiments>3</experiments>
</comment>
<comment type="interaction">
    <interactant intactId="EBI-25506855">
        <id>O23160</id>
    </interactant>
    <interactant intactId="EBI-1238932">
        <id>Q39021</id>
        <label>MPK1</label>
    </interactant>
    <organismsDiffer>false</organismsDiffer>
    <experiments>3</experiments>
</comment>
<comment type="interaction">
    <interactant intactId="EBI-25506855">
        <id>O23160</id>
    </interactant>
    <interactant intactId="EBI-25512843">
        <id>Q9LUC3</id>
        <label>MPK19</label>
    </interactant>
    <organismsDiffer>false</organismsDiffer>
    <experiments>3</experiments>
</comment>
<comment type="interaction">
    <interactant intactId="EBI-25506855">
        <id>O23160</id>
    </interactant>
    <interactant intactId="EBI-2358896">
        <id>Q9SJG9</id>
        <label>MPK20</label>
    </interactant>
    <organismsDiffer>false</organismsDiffer>
    <experiments>5</experiments>
</comment>
<comment type="interaction">
    <interactant intactId="EBI-25506855">
        <id>O23160</id>
    </interactant>
    <interactant intactId="EBI-15192813">
        <id>Q9FDW1</id>
        <label>MYB44</label>
    </interactant>
    <organismsDiffer>false</organismsDiffer>
    <experiments>5</experiments>
</comment>
<comment type="interaction">
    <interactant intactId="EBI-25506855">
        <id>O23160</id>
    </interactant>
    <interactant intactId="EBI-25511270">
        <id>Q9FX36</id>
        <label>MYB54</label>
    </interactant>
    <organismsDiffer>false</organismsDiffer>
    <experiments>3</experiments>
</comment>
<comment type="interaction">
    <interactant intactId="EBI-25506855">
        <id>O23160</id>
    </interactant>
    <interactant intactId="EBI-1148457">
        <id>Q8VZN1</id>
        <label>OFP5</label>
    </interactant>
    <organismsDiffer>false</organismsDiffer>
    <experiments>3</experiments>
</comment>
<comment type="interaction">
    <interactant intactId="EBI-25506855">
        <id>O23160</id>
    </interactant>
    <interactant intactId="EBI-594343">
        <id>O23715</id>
        <label>PAG1</label>
    </interactant>
    <organismsDiffer>false</organismsDiffer>
    <experiments>3</experiments>
</comment>
<comment type="interaction">
    <interactant intactId="EBI-25506855">
        <id>O23160</id>
    </interactant>
    <interactant intactId="EBI-594167">
        <id>Q8LD27</id>
        <label>PBA1</label>
    </interactant>
    <organismsDiffer>false</organismsDiffer>
    <experiments>3</experiments>
</comment>
<comment type="interaction">
    <interactant intactId="EBI-25506855">
        <id>O23160</id>
    </interactant>
    <interactant intactId="EBI-4435148">
        <id>Q9FNP4</id>
        <label>PIA2</label>
    </interactant>
    <organismsDiffer>false</organismsDiffer>
    <experiments>3</experiments>
</comment>
<comment type="interaction">
    <interactant intactId="EBI-25506855">
        <id>O23160</id>
    </interactant>
    <interactant intactId="EBI-1805558">
        <id>Q9S7H1</id>
        <label>psaD1</label>
    </interactant>
    <organismsDiffer>false</organismsDiffer>
    <experiments>3</experiments>
</comment>
<comment type="interaction">
    <interactant intactId="EBI-25506855">
        <id>O23160</id>
    </interactant>
    <interactant intactId="EBI-2008727">
        <id>Q9SA56</id>
        <label>PSAD2</label>
    </interactant>
    <organismsDiffer>false</organismsDiffer>
    <experiments>3</experiments>
</comment>
<comment type="interaction">
    <interactant intactId="EBI-25506855">
        <id>O23160</id>
    </interactant>
    <interactant intactId="EBI-25517119">
        <id>Q9SKY2</id>
        <label>PTAC18</label>
    </interactant>
    <organismsDiffer>false</organismsDiffer>
    <experiments>3</experiments>
</comment>
<comment type="interaction">
    <interactant intactId="EBI-25506855">
        <id>O23160</id>
    </interactant>
    <interactant intactId="EBI-7890412">
        <id>Q9XI19</id>
        <label>PTAC6</label>
    </interactant>
    <organismsDiffer>false</organismsDiffer>
    <experiments>3</experiments>
</comment>
<comment type="interaction">
    <interactant intactId="EBI-25506855">
        <id>O23160</id>
    </interactant>
    <interactant intactId="EBI-25516153">
        <id>Q9C8D1</id>
        <label>PUB20</label>
    </interactant>
    <organismsDiffer>false</organismsDiffer>
    <experiments>3</experiments>
</comment>
<comment type="interaction">
    <interactant intactId="EBI-25506855">
        <id>O23160</id>
    </interactant>
    <interactant intactId="EBI-4442587">
        <id>Q058P4</id>
        <label>PUB30</label>
    </interactant>
    <organismsDiffer>false</organismsDiffer>
    <experiments>3</experiments>
</comment>
<comment type="interaction">
    <interactant intactId="EBI-25506855">
        <id>O23160</id>
    </interactant>
    <interactant intactId="EBI-2429535">
        <id>Q9FGM1</id>
        <label>PYL8</label>
    </interactant>
    <organismsDiffer>false</organismsDiffer>
    <experiments>5</experiments>
</comment>
<comment type="interaction">
    <interactant intactId="EBI-25506855">
        <id>O23160</id>
    </interactant>
    <interactant intactId="EBI-2349513">
        <id>Q84MC7</id>
        <label>PYL9</label>
    </interactant>
    <organismsDiffer>false</organismsDiffer>
    <experiments>7</experiments>
</comment>
<comment type="interaction">
    <interactant intactId="EBI-25506855">
        <id>O23160</id>
    </interactant>
    <interactant intactId="EBI-2130722">
        <id>O48533</id>
        <label>PYM</label>
    </interactant>
    <organismsDiffer>false</organismsDiffer>
    <experiments>3</experiments>
</comment>
<comment type="interaction">
    <interactant intactId="EBI-25506855">
        <id>O23160</id>
    </interactant>
    <interactant intactId="EBI-1541681">
        <id>P10795</id>
        <label>RBCS-1A</label>
    </interactant>
    <organismsDiffer>false</organismsDiffer>
    <experiments>3</experiments>
</comment>
<comment type="interaction">
    <interactant intactId="EBI-25506855">
        <id>O23160</id>
    </interactant>
    <interactant intactId="EBI-1633812">
        <id>Q42404</id>
        <label>RNU1</label>
    </interactant>
    <organismsDiffer>false</organismsDiffer>
    <experiments>3</experiments>
</comment>
<comment type="interaction">
    <interactant intactId="EBI-25506855">
        <id>O23160</id>
    </interactant>
    <interactant intactId="EBI-4458310">
        <id>Q9LTV3</id>
        <label>SAUR72</label>
    </interactant>
    <organismsDiffer>false</organismsDiffer>
    <experiments>3</experiments>
</comment>
<comment type="interaction">
    <interactant intactId="EBI-25506855">
        <id>O23160</id>
    </interactant>
    <interactant intactId="EBI-4446419">
        <id>Q93WE4</id>
        <label>SINAT6</label>
    </interactant>
    <organismsDiffer>false</organismsDiffer>
    <experiments>3</experiments>
</comment>
<comment type="interaction">
    <interactant intactId="EBI-25506855">
        <id>O23160</id>
    </interactant>
    <interactant intactId="EBI-927038">
        <id>Q8VY74</id>
        <label>SNRNP35</label>
    </interactant>
    <organismsDiffer>false</organismsDiffer>
    <experiments>3</experiments>
</comment>
<comment type="interaction">
    <interactant intactId="EBI-25506855">
        <id>O23160</id>
    </interactant>
    <interactant intactId="EBI-4434999">
        <id>Q9FJJ3</id>
        <label>SRO5</label>
    </interactant>
    <organismsDiffer>false</organismsDiffer>
    <experiments>3</experiments>
</comment>
<comment type="interaction">
    <interactant intactId="EBI-25506855">
        <id>O23160</id>
    </interactant>
    <interactant intactId="EBI-4424123">
        <id>Q0WT24</id>
        <label>STOP2</label>
    </interactant>
    <organismsDiffer>false</organismsDiffer>
    <experiments>3</experiments>
</comment>
<comment type="interaction">
    <interactant intactId="EBI-25506855">
        <id>O23160</id>
    </interactant>
    <interactant intactId="EBI-1537353">
        <id>Q9FHW2</id>
        <label>SWC6</label>
    </interactant>
    <organismsDiffer>false</organismsDiffer>
    <experiments>3</experiments>
</comment>
<comment type="interaction">
    <interactant intactId="EBI-25506855">
        <id>O23160</id>
    </interactant>
    <interactant intactId="EBI-4451280">
        <id>Q9LTA3</id>
        <label>UGT91C1</label>
    </interactant>
    <organismsDiffer>false</organismsDiffer>
    <experiments>3</experiments>
</comment>
<comment type="interaction">
    <interactant intactId="EBI-25506855">
        <id>O23160</id>
    </interactant>
    <interactant intactId="EBI-25516537">
        <id>Q9T0A6</id>
        <label>UIEF2</label>
    </interactant>
    <organismsDiffer>false</organismsDiffer>
    <experiments>3</experiments>
</comment>
<comment type="interaction">
    <interactant intactId="EBI-25506855">
        <id>O23160</id>
    </interactant>
    <interactant intactId="EBI-1239118">
        <id>O04336</id>
        <label>WRKY21</label>
    </interactant>
    <organismsDiffer>false</organismsDiffer>
    <experiments>3</experiments>
</comment>
<comment type="interaction">
    <interactant intactId="EBI-25506855">
        <id>O23160</id>
    </interactant>
    <interactant intactId="EBI-15202502">
        <id>Q8H0Y8</id>
        <label>WRKY41</label>
    </interactant>
    <organismsDiffer>false</organismsDiffer>
    <experiments>3</experiments>
</comment>
<comment type="interaction">
    <interactant intactId="EBI-25506855">
        <id>O23160</id>
    </interactant>
    <interactant intactId="EBI-25516773">
        <id>Q9SHJ1</id>
    </interactant>
    <organismsDiffer>false</organismsDiffer>
    <experiments>3</experiments>
</comment>
<comment type="subcellular location">
    <subcellularLocation>
        <location evidence="1 3">Nucleus</location>
    </subcellularLocation>
</comment>
<comment type="induction">
    <text evidence="3">Induced by salt stress.</text>
</comment>
<comment type="disruption phenotype">
    <text evidence="3">No visible phenotype under normal growth conditions, but mutant seedlings exhibit increased survival rate upon salt stress.</text>
</comment>
<name>MYB73_ARATH</name>
<proteinExistence type="evidence at protein level"/>
<dbReference type="EMBL" id="AY519613">
    <property type="protein sequence ID" value="AAS10083.1"/>
    <property type="molecule type" value="mRNA"/>
</dbReference>
<dbReference type="EMBL" id="Z99707">
    <property type="protein sequence ID" value="CAB16756.1"/>
    <property type="molecule type" value="Genomic_DNA"/>
</dbReference>
<dbReference type="EMBL" id="AL161591">
    <property type="protein sequence ID" value="CAB80392.1"/>
    <property type="molecule type" value="Genomic_DNA"/>
</dbReference>
<dbReference type="EMBL" id="CP002687">
    <property type="protein sequence ID" value="AEE86774.1"/>
    <property type="molecule type" value="Genomic_DNA"/>
</dbReference>
<dbReference type="EMBL" id="AY063912">
    <property type="protein sequence ID" value="AAL36268.1"/>
    <property type="molecule type" value="mRNA"/>
</dbReference>
<dbReference type="EMBL" id="AY091267">
    <property type="protein sequence ID" value="AAM14206.1"/>
    <property type="molecule type" value="mRNA"/>
</dbReference>
<dbReference type="EMBL" id="AF062906">
    <property type="protein sequence ID" value="AAC83628.1"/>
    <property type="molecule type" value="mRNA"/>
</dbReference>
<dbReference type="PIR" id="C85440">
    <property type="entry name" value="C85440"/>
</dbReference>
<dbReference type="PIR" id="T51678">
    <property type="entry name" value="T51678"/>
</dbReference>
<dbReference type="RefSeq" id="NP_195443.1">
    <property type="nucleotide sequence ID" value="NM_119889.2"/>
</dbReference>
<dbReference type="SMR" id="O23160"/>
<dbReference type="FunCoup" id="O23160">
    <property type="interactions" value="5"/>
</dbReference>
<dbReference type="IntAct" id="O23160">
    <property type="interactions" value="121"/>
</dbReference>
<dbReference type="STRING" id="3702.O23160"/>
<dbReference type="iPTMnet" id="O23160"/>
<dbReference type="PaxDb" id="3702-AT4G37260.1"/>
<dbReference type="ProteomicsDB" id="251406"/>
<dbReference type="EnsemblPlants" id="AT4G37260.1">
    <property type="protein sequence ID" value="AT4G37260.1"/>
    <property type="gene ID" value="AT4G37260"/>
</dbReference>
<dbReference type="GeneID" id="829880"/>
<dbReference type="Gramene" id="AT4G37260.1">
    <property type="protein sequence ID" value="AT4G37260.1"/>
    <property type="gene ID" value="AT4G37260"/>
</dbReference>
<dbReference type="KEGG" id="ath:AT4G37260"/>
<dbReference type="Araport" id="AT4G37260"/>
<dbReference type="TAIR" id="AT4G37260">
    <property type="gene designation" value="MYB73"/>
</dbReference>
<dbReference type="eggNOG" id="KOG0048">
    <property type="taxonomic scope" value="Eukaryota"/>
</dbReference>
<dbReference type="HOGENOM" id="CLU_028567_14_0_1"/>
<dbReference type="InParanoid" id="O23160"/>
<dbReference type="OMA" id="NEPTQVN"/>
<dbReference type="PhylomeDB" id="O23160"/>
<dbReference type="PRO" id="PR:O23160"/>
<dbReference type="Proteomes" id="UP000006548">
    <property type="component" value="Chromosome 4"/>
</dbReference>
<dbReference type="ExpressionAtlas" id="O23160">
    <property type="expression patterns" value="baseline and differential"/>
</dbReference>
<dbReference type="GO" id="GO:0005634">
    <property type="term" value="C:nucleus"/>
    <property type="evidence" value="ECO:0000314"/>
    <property type="project" value="UniProtKB"/>
</dbReference>
<dbReference type="GO" id="GO:0003700">
    <property type="term" value="F:DNA-binding transcription factor activity"/>
    <property type="evidence" value="ECO:0000250"/>
    <property type="project" value="TAIR"/>
</dbReference>
<dbReference type="GO" id="GO:0000976">
    <property type="term" value="F:transcription cis-regulatory region binding"/>
    <property type="evidence" value="ECO:0000353"/>
    <property type="project" value="TAIR"/>
</dbReference>
<dbReference type="GO" id="GO:0019760">
    <property type="term" value="P:glucosinolate metabolic process"/>
    <property type="evidence" value="ECO:0000315"/>
    <property type="project" value="TAIR"/>
</dbReference>
<dbReference type="GO" id="GO:1901001">
    <property type="term" value="P:negative regulation of response to salt stress"/>
    <property type="evidence" value="ECO:0000315"/>
    <property type="project" value="UniProtKB"/>
</dbReference>
<dbReference type="GO" id="GO:0010929">
    <property type="term" value="P:positive regulation of auxin mediated signaling pathway"/>
    <property type="evidence" value="ECO:0000314"/>
    <property type="project" value="UniProtKB"/>
</dbReference>
<dbReference type="GO" id="GO:0006355">
    <property type="term" value="P:regulation of DNA-templated transcription"/>
    <property type="evidence" value="ECO:0000314"/>
    <property type="project" value="UniProtKB"/>
</dbReference>
<dbReference type="CDD" id="cd00167">
    <property type="entry name" value="SANT"/>
    <property type="match status" value="2"/>
</dbReference>
<dbReference type="FunFam" id="1.10.10.60:FF:000060">
    <property type="entry name" value="MYB transcription factor"/>
    <property type="match status" value="1"/>
</dbReference>
<dbReference type="FunFam" id="1.10.10.60:FF:000344">
    <property type="entry name" value="Transcription factor MYB44"/>
    <property type="match status" value="1"/>
</dbReference>
<dbReference type="Gene3D" id="1.10.10.60">
    <property type="entry name" value="Homeodomain-like"/>
    <property type="match status" value="2"/>
</dbReference>
<dbReference type="InterPro" id="IPR009057">
    <property type="entry name" value="Homeodomain-like_sf"/>
</dbReference>
<dbReference type="InterPro" id="IPR017930">
    <property type="entry name" value="Myb_dom"/>
</dbReference>
<dbReference type="InterPro" id="IPR050560">
    <property type="entry name" value="MYB_TF"/>
</dbReference>
<dbReference type="InterPro" id="IPR001005">
    <property type="entry name" value="SANT/Myb"/>
</dbReference>
<dbReference type="PANTHER" id="PTHR45614">
    <property type="entry name" value="MYB PROTEIN-RELATED"/>
    <property type="match status" value="1"/>
</dbReference>
<dbReference type="PANTHER" id="PTHR45614:SF293">
    <property type="entry name" value="TRANSCRIPTION FACTOR MYB73"/>
    <property type="match status" value="1"/>
</dbReference>
<dbReference type="Pfam" id="PF00249">
    <property type="entry name" value="Myb_DNA-binding"/>
    <property type="match status" value="2"/>
</dbReference>
<dbReference type="SMART" id="SM00717">
    <property type="entry name" value="SANT"/>
    <property type="match status" value="2"/>
</dbReference>
<dbReference type="SUPFAM" id="SSF46689">
    <property type="entry name" value="Homeodomain-like"/>
    <property type="match status" value="1"/>
</dbReference>
<dbReference type="PROSITE" id="PS51294">
    <property type="entry name" value="HTH_MYB"/>
    <property type="match status" value="2"/>
</dbReference>
<keyword id="KW-0238">DNA-binding</keyword>
<keyword id="KW-0539">Nucleus</keyword>
<keyword id="KW-1185">Reference proteome</keyword>
<keyword id="KW-0677">Repeat</keyword>
<keyword id="KW-0804">Transcription</keyword>
<keyword id="KW-0805">Transcription regulation</keyword>